<name>CXCR6_PANTR</name>
<dbReference type="EMBL" id="AF084229">
    <property type="protein sequence ID" value="AAD52041.1"/>
    <property type="molecule type" value="mRNA"/>
</dbReference>
<dbReference type="RefSeq" id="NP_001009051.1">
    <property type="nucleotide sequence ID" value="NM_001009051.1"/>
</dbReference>
<dbReference type="SMR" id="Q9TV16"/>
<dbReference type="FunCoup" id="Q9TV16">
    <property type="interactions" value="875"/>
</dbReference>
<dbReference type="STRING" id="9598.ENSPTRP00000054532"/>
<dbReference type="GlyCosmos" id="Q9TV16">
    <property type="glycosylation" value="1 site, No reported glycans"/>
</dbReference>
<dbReference type="PaxDb" id="9598-ENSPTRP00000054532"/>
<dbReference type="Ensembl" id="ENSPTRT00000061984.3">
    <property type="protein sequence ID" value="ENSPTRP00000054532.2"/>
    <property type="gene ID" value="ENSPTRG00000014843.6"/>
</dbReference>
<dbReference type="GeneID" id="450138"/>
<dbReference type="KEGG" id="ptr:450138"/>
<dbReference type="CTD" id="10663"/>
<dbReference type="VGNC" id="VGNC:8832">
    <property type="gene designation" value="CXCR6"/>
</dbReference>
<dbReference type="eggNOG" id="ENOG502QSJQ">
    <property type="taxonomic scope" value="Eukaryota"/>
</dbReference>
<dbReference type="GeneTree" id="ENSGT01030000234667"/>
<dbReference type="HOGENOM" id="CLU_009579_8_3_1"/>
<dbReference type="InParanoid" id="Q9TV16"/>
<dbReference type="OMA" id="YASIHEW"/>
<dbReference type="OrthoDB" id="4898at9604"/>
<dbReference type="TreeFam" id="TF330966"/>
<dbReference type="Proteomes" id="UP000002277">
    <property type="component" value="Chromosome 3"/>
</dbReference>
<dbReference type="Bgee" id="ENSPTRG00000014843">
    <property type="expression patterns" value="Expressed in skeletal muscle tissue and 13 other cell types or tissues"/>
</dbReference>
<dbReference type="GO" id="GO:0009897">
    <property type="term" value="C:external side of plasma membrane"/>
    <property type="evidence" value="ECO:0000318"/>
    <property type="project" value="GO_Central"/>
</dbReference>
<dbReference type="GO" id="GO:0019957">
    <property type="term" value="F:C-C chemokine binding"/>
    <property type="evidence" value="ECO:0000318"/>
    <property type="project" value="GO_Central"/>
</dbReference>
<dbReference type="GO" id="GO:0016493">
    <property type="term" value="F:C-C chemokine receptor activity"/>
    <property type="evidence" value="ECO:0000318"/>
    <property type="project" value="GO_Central"/>
</dbReference>
<dbReference type="GO" id="GO:0016494">
    <property type="term" value="F:C-X-C chemokine receptor activity"/>
    <property type="evidence" value="ECO:0007669"/>
    <property type="project" value="InterPro"/>
</dbReference>
<dbReference type="GO" id="GO:0015026">
    <property type="term" value="F:coreceptor activity"/>
    <property type="evidence" value="ECO:0007669"/>
    <property type="project" value="InterPro"/>
</dbReference>
<dbReference type="GO" id="GO:0019722">
    <property type="term" value="P:calcium-mediated signaling"/>
    <property type="evidence" value="ECO:0000318"/>
    <property type="project" value="GO_Central"/>
</dbReference>
<dbReference type="GO" id="GO:0060326">
    <property type="term" value="P:cell chemotaxis"/>
    <property type="evidence" value="ECO:0000318"/>
    <property type="project" value="GO_Central"/>
</dbReference>
<dbReference type="GO" id="GO:0006955">
    <property type="term" value="P:immune response"/>
    <property type="evidence" value="ECO:0000318"/>
    <property type="project" value="GO_Central"/>
</dbReference>
<dbReference type="GO" id="GO:0006954">
    <property type="term" value="P:inflammatory response"/>
    <property type="evidence" value="ECO:0007669"/>
    <property type="project" value="InterPro"/>
</dbReference>
<dbReference type="GO" id="GO:0007204">
    <property type="term" value="P:positive regulation of cytosolic calcium ion concentration"/>
    <property type="evidence" value="ECO:0000318"/>
    <property type="project" value="GO_Central"/>
</dbReference>
<dbReference type="CDD" id="cd15173">
    <property type="entry name" value="7tmA_CXCR6"/>
    <property type="match status" value="1"/>
</dbReference>
<dbReference type="FunFam" id="1.20.1070.10:FF:000035">
    <property type="entry name" value="C-C chemokine receptor type 6"/>
    <property type="match status" value="1"/>
</dbReference>
<dbReference type="Gene3D" id="1.20.1070.10">
    <property type="entry name" value="Rhodopsin 7-helix transmembrane proteins"/>
    <property type="match status" value="1"/>
</dbReference>
<dbReference type="InterPro" id="IPR050119">
    <property type="entry name" value="CCR1-9-like"/>
</dbReference>
<dbReference type="InterPro" id="IPR002235">
    <property type="entry name" value="Chemokine_CXCR6"/>
</dbReference>
<dbReference type="InterPro" id="IPR000355">
    <property type="entry name" value="Chemokine_rcpt"/>
</dbReference>
<dbReference type="InterPro" id="IPR000276">
    <property type="entry name" value="GPCR_Rhodpsn"/>
</dbReference>
<dbReference type="InterPro" id="IPR017452">
    <property type="entry name" value="GPCR_Rhodpsn_7TM"/>
</dbReference>
<dbReference type="PANTHER" id="PTHR10489:SF705">
    <property type="entry name" value="C-X-C CHEMOKINE RECEPTOR TYPE 6"/>
    <property type="match status" value="1"/>
</dbReference>
<dbReference type="PANTHER" id="PTHR10489">
    <property type="entry name" value="CELL ADHESION MOLECULE"/>
    <property type="match status" value="1"/>
</dbReference>
<dbReference type="Pfam" id="PF00001">
    <property type="entry name" value="7tm_1"/>
    <property type="match status" value="1"/>
</dbReference>
<dbReference type="PRINTS" id="PR00657">
    <property type="entry name" value="CCCHEMOKINER"/>
</dbReference>
<dbReference type="PRINTS" id="PR01105">
    <property type="entry name" value="CXCCHMKINER6"/>
</dbReference>
<dbReference type="PRINTS" id="PR00237">
    <property type="entry name" value="GPCRRHODOPSN"/>
</dbReference>
<dbReference type="SUPFAM" id="SSF81321">
    <property type="entry name" value="Family A G protein-coupled receptor-like"/>
    <property type="match status" value="1"/>
</dbReference>
<dbReference type="PROSITE" id="PS00237">
    <property type="entry name" value="G_PROTEIN_RECEP_F1_1"/>
    <property type="match status" value="1"/>
</dbReference>
<dbReference type="PROSITE" id="PS50262">
    <property type="entry name" value="G_PROTEIN_RECEP_F1_2"/>
    <property type="match status" value="1"/>
</dbReference>
<sequence>MAEHDYHEDYGFNSFNDSSQEEHQDFLQFSKVFLPCMYLVVFVCGLVGNSLVLVISIFYHKLQSLTDVFLVNLPLADLVFVCTLPFWAYAGIHEWVFGQVMCKSLLGIYTINFYTSMLILTCITVDRFIVVVKATKAYNQQAKRMTWGKVTSLLIWVISLLVSLPQIIYGNVFNLDKLICGYHDEAISTVVLATQMTLGFFLPLLTMIVCYSVIIKTLLHAGGFQKHRSLKIIFLVMAVFLLTQMPFNLMKLIRSTHWEYYAMTSFHYTIMVTEAIAYLRACLNPVLYAFVSLKFRKNFWKLVKDIGCLPYLGVSHQWKSSEDNSKTFSASHNVEATSMFQL</sequence>
<feature type="chain" id="PRO_0000069369" description="C-X-C chemokine receptor type 6">
    <location>
        <begin position="1"/>
        <end position="342"/>
    </location>
</feature>
<feature type="topological domain" description="Extracellular" evidence="1">
    <location>
        <begin position="1"/>
        <end position="32"/>
    </location>
</feature>
<feature type="transmembrane region" description="Helical; Name=1" evidence="1">
    <location>
        <begin position="33"/>
        <end position="59"/>
    </location>
</feature>
<feature type="topological domain" description="Cytoplasmic" evidence="1">
    <location>
        <begin position="60"/>
        <end position="68"/>
    </location>
</feature>
<feature type="transmembrane region" description="Helical; Name=2" evidence="1">
    <location>
        <begin position="69"/>
        <end position="89"/>
    </location>
</feature>
<feature type="topological domain" description="Extracellular" evidence="1">
    <location>
        <begin position="90"/>
        <end position="103"/>
    </location>
</feature>
<feature type="transmembrane region" description="Helical; Name=3" evidence="1">
    <location>
        <begin position="104"/>
        <end position="125"/>
    </location>
</feature>
<feature type="topological domain" description="Cytoplasmic" evidence="1">
    <location>
        <begin position="126"/>
        <end position="143"/>
    </location>
</feature>
<feature type="transmembrane region" description="Helical; Name=4" evidence="1">
    <location>
        <begin position="144"/>
        <end position="164"/>
    </location>
</feature>
<feature type="topological domain" description="Extracellular" evidence="1">
    <location>
        <begin position="165"/>
        <end position="187"/>
    </location>
</feature>
<feature type="transmembrane region" description="Helical; Name=5" evidence="1">
    <location>
        <begin position="188"/>
        <end position="215"/>
    </location>
</feature>
<feature type="topological domain" description="Cytoplasmic" evidence="1">
    <location>
        <begin position="216"/>
        <end position="231"/>
    </location>
</feature>
<feature type="transmembrane region" description="Helical; Name=6" evidence="1">
    <location>
        <begin position="232"/>
        <end position="259"/>
    </location>
</feature>
<feature type="topological domain" description="Extracellular" evidence="1">
    <location>
        <begin position="260"/>
        <end position="275"/>
    </location>
</feature>
<feature type="transmembrane region" description="Helical; Name=7" evidence="1">
    <location>
        <begin position="276"/>
        <end position="293"/>
    </location>
</feature>
<feature type="topological domain" description="Cytoplasmic" evidence="1">
    <location>
        <begin position="294"/>
        <end position="342"/>
    </location>
</feature>
<feature type="glycosylation site" description="N-linked (GlcNAc...) asparagine" evidence="1">
    <location>
        <position position="16"/>
    </location>
</feature>
<feature type="disulfide bond" evidence="2">
    <location>
        <begin position="102"/>
        <end position="180"/>
    </location>
</feature>
<comment type="function">
    <text>Receptor for the C-X-C chemokine CXCL16. Used as a coreceptor by SIVs and by strains of HIV-2 and m-tropic HIV-1.</text>
</comment>
<comment type="subcellular location">
    <subcellularLocation>
        <location>Cell membrane</location>
        <topology>Multi-pass membrane protein</topology>
    </subcellularLocation>
</comment>
<comment type="similarity">
    <text evidence="2">Belongs to the G-protein coupled receptor 1 family.</text>
</comment>
<gene>
    <name type="primary">CXCR6</name>
    <name type="synonym">BONZO</name>
    <name type="synonym">STRL33</name>
</gene>
<reference key="1">
    <citation type="journal article" date="1999" name="AIDS Res. Hum. Retroviruses">
        <title>Sequences and predicted structures of chimpanzee STRL33 (Bonzo) and gpr15 (BOB).</title>
        <authorList>
            <person name="Brussel A."/>
            <person name="Pretet J.-L."/>
            <person name="Girard M."/>
            <person name="Butor C."/>
        </authorList>
    </citation>
    <scope>NUCLEOTIDE SEQUENCE [MRNA]</scope>
</reference>
<proteinExistence type="evidence at transcript level"/>
<evidence type="ECO:0000255" key="1"/>
<evidence type="ECO:0000255" key="2">
    <source>
        <dbReference type="PROSITE-ProRule" id="PRU00521"/>
    </source>
</evidence>
<protein>
    <recommendedName>
        <fullName>C-X-C chemokine receptor type 6</fullName>
        <shortName>CXC-R6</shortName>
        <shortName>CXCR-6</shortName>
    </recommendedName>
    <alternativeName>
        <fullName>G-protein coupled receptor STRL33</fullName>
    </alternativeName>
    <alternativeName>
        <fullName>G-protein coupled receptor bonzo</fullName>
    </alternativeName>
    <cdAntigenName>CD186</cdAntigenName>
</protein>
<organism>
    <name type="scientific">Pan troglodytes</name>
    <name type="common">Chimpanzee</name>
    <dbReference type="NCBI Taxonomy" id="9598"/>
    <lineage>
        <taxon>Eukaryota</taxon>
        <taxon>Metazoa</taxon>
        <taxon>Chordata</taxon>
        <taxon>Craniata</taxon>
        <taxon>Vertebrata</taxon>
        <taxon>Euteleostomi</taxon>
        <taxon>Mammalia</taxon>
        <taxon>Eutheria</taxon>
        <taxon>Euarchontoglires</taxon>
        <taxon>Primates</taxon>
        <taxon>Haplorrhini</taxon>
        <taxon>Catarrhini</taxon>
        <taxon>Hominidae</taxon>
        <taxon>Pan</taxon>
    </lineage>
</organism>
<keyword id="KW-1003">Cell membrane</keyword>
<keyword id="KW-1015">Disulfide bond</keyword>
<keyword id="KW-0297">G-protein coupled receptor</keyword>
<keyword id="KW-0325">Glycoprotein</keyword>
<keyword id="KW-0472">Membrane</keyword>
<keyword id="KW-0675">Receptor</keyword>
<keyword id="KW-1185">Reference proteome</keyword>
<keyword id="KW-0807">Transducer</keyword>
<keyword id="KW-0812">Transmembrane</keyword>
<keyword id="KW-1133">Transmembrane helix</keyword>
<accession>Q9TV16</accession>